<reference key="1">
    <citation type="journal article" date="1998" name="Can. J. Microbiol.">
        <title>Isolation and characterization of ACC deaminase genes from two different plant growth-promoting rhizobacteria.</title>
        <authorList>
            <person name="Shah S."/>
            <person name="Li J."/>
            <person name="Moffatt B.A."/>
            <person name="Glick B.R."/>
        </authorList>
    </citation>
    <scope>NUCLEOTIDE SEQUENCE [GENOMIC DNA]</scope>
    <source>
        <strain>UW4</strain>
    </source>
</reference>
<reference key="2">
    <citation type="journal article" date="2004" name="Biochim. Biophys. Acta">
        <title>Expression and characterization of 1-aminocyclopropane-1-carboxylate deaminase from the rhizobacterium Pseudomonas putida UW4: a key enzyme in bacterial plant growth promotion.</title>
        <authorList>
            <person name="Hontzeas N."/>
            <person name="Zoidakis J."/>
            <person name="Glick B.R."/>
            <person name="Abu-Omar M.M."/>
        </authorList>
    </citation>
    <scope>NUCLEOTIDE SEQUENCE [GENOMIC DNA]</scope>
    <scope>FUNCTION</scope>
    <scope>CATALYTIC ACTIVITY</scope>
    <scope>BIOPHYSICOCHEMICAL PROPERTIES</scope>
    <scope>MUTAGENESIS OF GLY-44</scope>
    <source>
        <strain>UW4</strain>
    </source>
</reference>
<evidence type="ECO:0000255" key="1">
    <source>
        <dbReference type="HAMAP-Rule" id="MF_00807"/>
    </source>
</evidence>
<evidence type="ECO:0000269" key="2">
    <source>
    </source>
</evidence>
<evidence type="ECO:0000305" key="3"/>
<evidence type="ECO:0000305" key="4">
    <source>
    </source>
</evidence>
<accession>Q5PWZ8</accession>
<protein>
    <recommendedName>
        <fullName evidence="1">1-aminocyclopropane-1-carboxylate deaminase</fullName>
        <shortName evidence="1">ACC deaminase</shortName>
        <shortName evidence="1">ACCD</shortName>
        <ecNumber evidence="1">3.5.99.7</ecNumber>
    </recommendedName>
</protein>
<sequence length="338" mass="36874">MNLNRFERYPLTFGPSPITPLKRLSEHLGGKVELYAKREDCNSGLAFGGNKTRKLEYLIPEAIEQGCDTLVSIGGIQSNQTRQVAAVAAHLGMKCVLVQENWVNYSDAVYDRVGNIEMSRIMGADVRLDAAGFDIGIRPSWEKAMSDVVERGGKPFPIPAGCSEHPYGGLGFVGFAEEVRQQEKELGFKFDYIVVCSVTGSTQAGMVVGFAADGRSKNVIGVDASAKPEQTKAQILRIARHTAELVELGREITEEDVVLDTRFAYPEYGLPNEGTLEAIRLCGSLEGVLTDPVYEGKSMHGMIEMVRRGEFPDGSKVLYAHLGGAPALNAYSFLFRNG</sequence>
<gene>
    <name evidence="1" type="primary">acdS</name>
</gene>
<name>1A1D_PSEPU</name>
<proteinExistence type="evidence at protein level"/>
<organism>
    <name type="scientific">Pseudomonas putida</name>
    <name type="common">Arthrobacter siderocapsulatus</name>
    <dbReference type="NCBI Taxonomy" id="303"/>
    <lineage>
        <taxon>Bacteria</taxon>
        <taxon>Pseudomonadati</taxon>
        <taxon>Pseudomonadota</taxon>
        <taxon>Gammaproteobacteria</taxon>
        <taxon>Pseudomonadales</taxon>
        <taxon>Pseudomonadaceae</taxon>
        <taxon>Pseudomonas</taxon>
    </lineage>
</organism>
<keyword id="KW-0378">Hydrolase</keyword>
<keyword id="KW-0663">Pyridoxal phosphate</keyword>
<feature type="chain" id="PRO_0000184502" description="1-aminocyclopropane-1-carboxylate deaminase">
    <location>
        <begin position="1"/>
        <end position="338"/>
    </location>
</feature>
<feature type="active site" description="Nucleophile" evidence="1">
    <location>
        <position position="78"/>
    </location>
</feature>
<feature type="modified residue" description="N6-(pyridoxal phosphate)lysine" evidence="1">
    <location>
        <position position="51"/>
    </location>
</feature>
<feature type="mutagenesis site" description="Loss of activity." evidence="2">
    <original>G</original>
    <variation>D</variation>
    <location>
        <position position="44"/>
    </location>
</feature>
<feature type="sequence conflict" description="In Ref. 1; AAD05069." evidence="3" ref="1">
    <original>EEV</original>
    <variation>KEL</variation>
    <location>
        <begin position="177"/>
        <end position="179"/>
    </location>
</feature>
<feature type="sequence conflict" description="In Ref. 1; AAD05069." evidence="3" ref="1">
    <original>E</original>
    <variation>D</variation>
    <location>
        <position position="185"/>
    </location>
</feature>
<comment type="function">
    <text evidence="1 2">Catalyzes a cyclopropane ring-opening reaction, the irreversible conversion of 1-aminocyclopropane-1-carboxylate (ACC) to ammonia and alpha-ketobutyrate. Allows growth on ACC as a nitrogen source.</text>
</comment>
<comment type="catalytic activity">
    <reaction evidence="1 2">
        <text>1-aminocyclopropane-1-carboxylate + H2O = 2-oxobutanoate + NH4(+)</text>
        <dbReference type="Rhea" id="RHEA:16933"/>
        <dbReference type="ChEBI" id="CHEBI:15377"/>
        <dbReference type="ChEBI" id="CHEBI:16763"/>
        <dbReference type="ChEBI" id="CHEBI:28938"/>
        <dbReference type="ChEBI" id="CHEBI:58360"/>
        <dbReference type="EC" id="3.5.99.7"/>
    </reaction>
</comment>
<comment type="cofactor">
    <cofactor evidence="1">
        <name>pyridoxal 5'-phosphate</name>
        <dbReference type="ChEBI" id="CHEBI:597326"/>
    </cofactor>
</comment>
<comment type="biophysicochemical properties">
    <kinetics>
        <KM evidence="2">3.4 mM for 1-aminocyclopropane-1-carboxylate</KM>
    </kinetics>
    <phDependence>
        <text evidence="2">Optimum pH is 8.0.</text>
    </phDependence>
</comment>
<comment type="subunit">
    <text evidence="1">Homotrimer.</text>
</comment>
<comment type="similarity">
    <text evidence="1">Belongs to the ACC deaminase/D-cysteine desulfhydrase family.</text>
</comment>
<comment type="caution">
    <text evidence="4">Was originally (PubMed:9851025) thought to originate from Pseudomonas sp. Then it was changed to Enterobacter cloacae, then to P.putida.</text>
</comment>
<dbReference type="EC" id="3.5.99.7" evidence="1"/>
<dbReference type="EMBL" id="AF047710">
    <property type="protein sequence ID" value="AAD05069.1"/>
    <property type="molecule type" value="Genomic_DNA"/>
</dbReference>
<dbReference type="EMBL" id="AY823987">
    <property type="protein sequence ID" value="AAV73804.1"/>
    <property type="molecule type" value="Genomic_DNA"/>
</dbReference>
<dbReference type="SMR" id="Q5PWZ8"/>
<dbReference type="BRENDA" id="3.5.99.7">
    <property type="organism ID" value="5092"/>
</dbReference>
<dbReference type="SABIO-RK" id="Q5PWZ8"/>
<dbReference type="GO" id="GO:0008660">
    <property type="term" value="F:1-aminocyclopropane-1-carboxylate deaminase activity"/>
    <property type="evidence" value="ECO:0007669"/>
    <property type="project" value="UniProtKB-UniRule"/>
</dbReference>
<dbReference type="GO" id="GO:0019148">
    <property type="term" value="F:D-cysteine desulfhydrase activity"/>
    <property type="evidence" value="ECO:0007669"/>
    <property type="project" value="TreeGrafter"/>
</dbReference>
<dbReference type="GO" id="GO:0030170">
    <property type="term" value="F:pyridoxal phosphate binding"/>
    <property type="evidence" value="ECO:0007669"/>
    <property type="project" value="InterPro"/>
</dbReference>
<dbReference type="GO" id="GO:0018871">
    <property type="term" value="P:1-aminocyclopropane-1-carboxylate metabolic process"/>
    <property type="evidence" value="ECO:0007669"/>
    <property type="project" value="UniProtKB-UniRule"/>
</dbReference>
<dbReference type="GO" id="GO:0009310">
    <property type="term" value="P:amine catabolic process"/>
    <property type="evidence" value="ECO:0007669"/>
    <property type="project" value="InterPro"/>
</dbReference>
<dbReference type="CDD" id="cd06449">
    <property type="entry name" value="ACCD"/>
    <property type="match status" value="1"/>
</dbReference>
<dbReference type="FunFam" id="3.40.50.1100:FF:000048">
    <property type="entry name" value="1-aminocyclopropane-1-carboxylate deaminase"/>
    <property type="match status" value="1"/>
</dbReference>
<dbReference type="FunFam" id="3.40.50.1100:FF:000053">
    <property type="entry name" value="1-aminocyclopropane-1-carboxylate deaminase"/>
    <property type="match status" value="1"/>
</dbReference>
<dbReference type="Gene3D" id="3.40.50.1100">
    <property type="match status" value="2"/>
</dbReference>
<dbReference type="HAMAP" id="MF_00807">
    <property type="entry name" value="ACC_deaminase"/>
    <property type="match status" value="1"/>
</dbReference>
<dbReference type="InterPro" id="IPR027278">
    <property type="entry name" value="ACCD_DCysDesulf"/>
</dbReference>
<dbReference type="InterPro" id="IPR005965">
    <property type="entry name" value="ACP_carboxylate_deaminase"/>
</dbReference>
<dbReference type="InterPro" id="IPR020601">
    <property type="entry name" value="ACP_carboxylate_deaminase_bac"/>
</dbReference>
<dbReference type="InterPro" id="IPR001926">
    <property type="entry name" value="TrpB-like_PALP"/>
</dbReference>
<dbReference type="InterPro" id="IPR036052">
    <property type="entry name" value="TrpB-like_PALP_sf"/>
</dbReference>
<dbReference type="NCBIfam" id="TIGR01274">
    <property type="entry name" value="ACC_deam"/>
    <property type="match status" value="1"/>
</dbReference>
<dbReference type="PANTHER" id="PTHR43780">
    <property type="entry name" value="1-AMINOCYCLOPROPANE-1-CARBOXYLATE DEAMINASE-RELATED"/>
    <property type="match status" value="1"/>
</dbReference>
<dbReference type="PANTHER" id="PTHR43780:SF2">
    <property type="entry name" value="1-AMINOCYCLOPROPANE-1-CARBOXYLATE DEAMINASE-RELATED"/>
    <property type="match status" value="1"/>
</dbReference>
<dbReference type="Pfam" id="PF00291">
    <property type="entry name" value="PALP"/>
    <property type="match status" value="1"/>
</dbReference>
<dbReference type="PIRSF" id="PIRSF006278">
    <property type="entry name" value="ACCD_DCysDesulf"/>
    <property type="match status" value="1"/>
</dbReference>
<dbReference type="SUPFAM" id="SSF53686">
    <property type="entry name" value="Tryptophan synthase beta subunit-like PLP-dependent enzymes"/>
    <property type="match status" value="1"/>
</dbReference>